<accession>Q99055</accession>
<sequence length="520" mass="55644">MGRFSSLCALTAVIHSFGRVSAAIGPVTDLTISNGDVSPDGFTRAAVLANGVFPGPLITGNKGDNFQINVIDNLSNETMLKSTSIHWHGFFQKGTNWADGAAFVNQCPIATGNSFLYDFTATDQAGTFWYHSHLSTQYCDGLRGPMVVYDPSDPHADLYDVDDETTIITLSDWYHTAASLGAAFPIGSDSTLINGLGRFAGGDSTDLAVITVEQGKRYRMRLLSLSCDPNYVFSIDGHNMTIIEADAVNHEPLTVDSIQIYAGQRYSFVLTADQDIDNYFIRALPSAGTTSFDGGINSAILRYSGASEVDPTTTETTSVLPLDEANLVPLDSPAAPGDPNIGGVDYALNLDFNFDGTNFFINDVSFVSPTVPVLLQILSGTTSAADLLPSGSLFAVPSNSTIEISFPITATNAPGAPHPFHLHGHTFSIVRTAGSTDTNFVNPVRRDVVNTGTVGDNVTIRFTTDNPGPWFLHCHIDFHLEAGFAIVFSEDTADVSNTTTPSTAWEDLCPTYNALDSSDL</sequence>
<proteinExistence type="inferred from homology"/>
<gene>
    <name type="primary">LCC4</name>
</gene>
<feature type="signal peptide" evidence="4">
    <location>
        <begin position="1"/>
        <end position="18"/>
    </location>
</feature>
<feature type="chain" id="PRO_0000002946" description="Laccase-4">
    <location>
        <begin position="19"/>
        <end position="520"/>
    </location>
</feature>
<feature type="domain" description="Plastocyanin-like 1">
    <location>
        <begin position="24"/>
        <end position="149"/>
    </location>
</feature>
<feature type="domain" description="Plastocyanin-like 2">
    <location>
        <begin position="161"/>
        <end position="303"/>
    </location>
</feature>
<feature type="domain" description="Plastocyanin-like 3">
    <location>
        <begin position="370"/>
        <end position="491"/>
    </location>
</feature>
<feature type="binding site" description="type 2 copper site" evidence="1">
    <location>
        <position position="86"/>
    </location>
    <ligand>
        <name>Cu cation</name>
        <dbReference type="ChEBI" id="CHEBI:23378"/>
        <label>1</label>
    </ligand>
</feature>
<feature type="binding site" description="type 3 copper site" evidence="1">
    <location>
        <position position="88"/>
    </location>
    <ligand>
        <name>Cu cation</name>
        <dbReference type="ChEBI" id="CHEBI:23378"/>
        <label>2</label>
    </ligand>
</feature>
<feature type="binding site" description="type 3 copper site" evidence="1">
    <location>
        <position position="131"/>
    </location>
    <ligand>
        <name>Cu cation</name>
        <dbReference type="ChEBI" id="CHEBI:23378"/>
        <label>2</label>
    </ligand>
</feature>
<feature type="binding site" description="type 3 copper site" evidence="1">
    <location>
        <position position="133"/>
    </location>
    <ligand>
        <name>Cu cation</name>
        <dbReference type="ChEBI" id="CHEBI:23378"/>
        <label>3</label>
    </ligand>
</feature>
<feature type="binding site" description="type 1 copper site" evidence="1">
    <location>
        <position position="418"/>
    </location>
    <ligand>
        <name>Cu cation</name>
        <dbReference type="ChEBI" id="CHEBI:23378"/>
        <label>4</label>
    </ligand>
</feature>
<feature type="binding site" description="type 2 copper site" evidence="1">
    <location>
        <position position="421"/>
    </location>
    <ligand>
        <name>Cu cation</name>
        <dbReference type="ChEBI" id="CHEBI:23378"/>
        <label>1</label>
    </ligand>
</feature>
<feature type="binding site" description="type 3 copper site" evidence="1">
    <location>
        <position position="423"/>
    </location>
    <ligand>
        <name>Cu cation</name>
        <dbReference type="ChEBI" id="CHEBI:23378"/>
        <label>3</label>
    </ligand>
</feature>
<feature type="binding site" description="type 3 copper site" evidence="1">
    <location>
        <position position="473"/>
    </location>
    <ligand>
        <name>Cu cation</name>
        <dbReference type="ChEBI" id="CHEBI:23378"/>
        <label>3</label>
    </ligand>
</feature>
<feature type="binding site" description="type 1 copper site" evidence="1">
    <location>
        <position position="474"/>
    </location>
    <ligand>
        <name>Cu cation</name>
        <dbReference type="ChEBI" id="CHEBI:23378"/>
        <label>4</label>
    </ligand>
</feature>
<feature type="binding site" description="type 3 copper site" evidence="1">
    <location>
        <position position="475"/>
    </location>
    <ligand>
        <name>Cu cation</name>
        <dbReference type="ChEBI" id="CHEBI:23378"/>
        <label>2</label>
    </ligand>
</feature>
<feature type="binding site" description="type 1 copper site" evidence="1">
    <location>
        <position position="479"/>
    </location>
    <ligand>
        <name>Cu cation</name>
        <dbReference type="ChEBI" id="CHEBI:23378"/>
        <label>4</label>
    </ligand>
</feature>
<feature type="glycosylation site" description="N-linked (GlcNAc...) asparagine" evidence="4">
    <location>
        <position position="73"/>
    </location>
</feature>
<feature type="glycosylation site" description="N-linked (GlcNAc...) asparagine" evidence="4">
    <location>
        <position position="76"/>
    </location>
</feature>
<feature type="glycosylation site" description="N-linked (GlcNAc...) asparagine" evidence="4">
    <location>
        <position position="239"/>
    </location>
</feature>
<feature type="glycosylation site" description="N-linked (GlcNAc...) asparagine" evidence="4">
    <location>
        <position position="399"/>
    </location>
</feature>
<feature type="glycosylation site" description="N-linked (GlcNAc...) asparagine" evidence="4">
    <location>
        <position position="497"/>
    </location>
</feature>
<feature type="disulfide bond" evidence="2">
    <location>
        <begin position="107"/>
        <end position="509"/>
    </location>
</feature>
<feature type="disulfide bond" evidence="1">
    <location>
        <begin position="139"/>
        <end position="227"/>
    </location>
</feature>
<dbReference type="EC" id="1.10.3.2" evidence="2"/>
<dbReference type="EMBL" id="L78077">
    <property type="protein sequence ID" value="AAB47734.1"/>
    <property type="molecule type" value="Genomic_DNA"/>
</dbReference>
<dbReference type="PIR" id="JC5356">
    <property type="entry name" value="JC5356"/>
</dbReference>
<dbReference type="SMR" id="Q99055"/>
<dbReference type="CAZy" id="AA1">
    <property type="family name" value="Auxiliary Activities 1"/>
</dbReference>
<dbReference type="GlyCosmos" id="Q99055">
    <property type="glycosylation" value="5 sites, No reported glycans"/>
</dbReference>
<dbReference type="GO" id="GO:0005576">
    <property type="term" value="C:extracellular region"/>
    <property type="evidence" value="ECO:0007669"/>
    <property type="project" value="UniProtKB-SubCell"/>
</dbReference>
<dbReference type="GO" id="GO:0005507">
    <property type="term" value="F:copper ion binding"/>
    <property type="evidence" value="ECO:0007669"/>
    <property type="project" value="InterPro"/>
</dbReference>
<dbReference type="GO" id="GO:0052716">
    <property type="term" value="F:hydroquinone:oxygen oxidoreductase activity"/>
    <property type="evidence" value="ECO:0007669"/>
    <property type="project" value="UniProtKB-EC"/>
</dbReference>
<dbReference type="GO" id="GO:0046274">
    <property type="term" value="P:lignin catabolic process"/>
    <property type="evidence" value="ECO:0007669"/>
    <property type="project" value="UniProtKB-KW"/>
</dbReference>
<dbReference type="CDD" id="cd13856">
    <property type="entry name" value="CuRO_1_Tv-LCC_like"/>
    <property type="match status" value="1"/>
</dbReference>
<dbReference type="CDD" id="cd13882">
    <property type="entry name" value="CuRO_2_Tv-LCC_like"/>
    <property type="match status" value="1"/>
</dbReference>
<dbReference type="CDD" id="cd13903">
    <property type="entry name" value="CuRO_3_Tv-LCC_like"/>
    <property type="match status" value="1"/>
</dbReference>
<dbReference type="FunFam" id="2.60.40.420:FF:000045">
    <property type="entry name" value="Laccase 2"/>
    <property type="match status" value="1"/>
</dbReference>
<dbReference type="FunFam" id="2.60.40.420:FF:000125">
    <property type="entry name" value="Laccase 2"/>
    <property type="match status" value="1"/>
</dbReference>
<dbReference type="FunFam" id="2.60.40.420:FF:000112">
    <property type="entry name" value="Laccase B"/>
    <property type="match status" value="1"/>
</dbReference>
<dbReference type="Gene3D" id="2.60.40.420">
    <property type="entry name" value="Cupredoxins - blue copper proteins"/>
    <property type="match status" value="3"/>
</dbReference>
<dbReference type="InterPro" id="IPR011707">
    <property type="entry name" value="Cu-oxidase-like_N"/>
</dbReference>
<dbReference type="InterPro" id="IPR001117">
    <property type="entry name" value="Cu-oxidase_2nd"/>
</dbReference>
<dbReference type="InterPro" id="IPR011706">
    <property type="entry name" value="Cu-oxidase_C"/>
</dbReference>
<dbReference type="InterPro" id="IPR045087">
    <property type="entry name" value="Cu-oxidase_fam"/>
</dbReference>
<dbReference type="InterPro" id="IPR033138">
    <property type="entry name" value="Cu_oxidase_CS"/>
</dbReference>
<dbReference type="InterPro" id="IPR008972">
    <property type="entry name" value="Cupredoxin"/>
</dbReference>
<dbReference type="PANTHER" id="PTHR11709:SF511">
    <property type="entry name" value="LACCASE"/>
    <property type="match status" value="1"/>
</dbReference>
<dbReference type="PANTHER" id="PTHR11709">
    <property type="entry name" value="MULTI-COPPER OXIDASE"/>
    <property type="match status" value="1"/>
</dbReference>
<dbReference type="Pfam" id="PF00394">
    <property type="entry name" value="Cu-oxidase"/>
    <property type="match status" value="1"/>
</dbReference>
<dbReference type="Pfam" id="PF07731">
    <property type="entry name" value="Cu-oxidase_2"/>
    <property type="match status" value="1"/>
</dbReference>
<dbReference type="Pfam" id="PF07732">
    <property type="entry name" value="Cu-oxidase_3"/>
    <property type="match status" value="1"/>
</dbReference>
<dbReference type="SUPFAM" id="SSF49503">
    <property type="entry name" value="Cupredoxins"/>
    <property type="match status" value="3"/>
</dbReference>
<dbReference type="PROSITE" id="PS00079">
    <property type="entry name" value="MULTICOPPER_OXIDASE1"/>
    <property type="match status" value="1"/>
</dbReference>
<organism>
    <name type="scientific">Trametes villosa</name>
    <name type="common">White-rot fungus</name>
    <dbReference type="NCBI Taxonomy" id="47662"/>
    <lineage>
        <taxon>Eukaryota</taxon>
        <taxon>Fungi</taxon>
        <taxon>Dikarya</taxon>
        <taxon>Basidiomycota</taxon>
        <taxon>Agaricomycotina</taxon>
        <taxon>Agaricomycetes</taxon>
        <taxon>Polyporales</taxon>
        <taxon>Polyporaceae</taxon>
        <taxon>Trametes</taxon>
    </lineage>
</organism>
<comment type="function">
    <text evidence="2">Lignin degradation and detoxification of lignin-derived products.</text>
</comment>
<comment type="catalytic activity">
    <reaction evidence="2">
        <text>4 hydroquinone + O2 = 4 benzosemiquinone + 2 H2O</text>
        <dbReference type="Rhea" id="RHEA:11276"/>
        <dbReference type="ChEBI" id="CHEBI:15377"/>
        <dbReference type="ChEBI" id="CHEBI:15379"/>
        <dbReference type="ChEBI" id="CHEBI:17594"/>
        <dbReference type="ChEBI" id="CHEBI:17977"/>
        <dbReference type="EC" id="1.10.3.2"/>
    </reaction>
</comment>
<comment type="cofactor">
    <cofactor evidence="2">
        <name>Cu cation</name>
        <dbReference type="ChEBI" id="CHEBI:23378"/>
    </cofactor>
    <text evidence="2">Binds 4 Cu cations per monomer.</text>
</comment>
<comment type="subunit">
    <text evidence="3">Homodimer.</text>
</comment>
<comment type="subcellular location">
    <subcellularLocation>
        <location evidence="2">Secreted</location>
    </subcellularLocation>
</comment>
<comment type="similarity">
    <text evidence="5">Belongs to the multicopper oxidase family.</text>
</comment>
<keyword id="KW-0186">Copper</keyword>
<keyword id="KW-1015">Disulfide bond</keyword>
<keyword id="KW-0325">Glycoprotein</keyword>
<keyword id="KW-0439">Lignin degradation</keyword>
<keyword id="KW-0479">Metal-binding</keyword>
<keyword id="KW-0560">Oxidoreductase</keyword>
<keyword id="KW-0677">Repeat</keyword>
<keyword id="KW-0964">Secreted</keyword>
<keyword id="KW-0732">Signal</keyword>
<name>LAC4_TRAVI</name>
<reference key="1">
    <citation type="journal article" date="1996" name="Gene">
        <title>Cloning and characterization of three laccase genes from the white-rot basidiomycete Trametes villosa: genomic organization of the laccase gene family.</title>
        <authorList>
            <person name="Yaver D.S."/>
            <person name="Golightly E.J."/>
        </authorList>
    </citation>
    <scope>NUCLEOTIDE SEQUENCE [GENOMIC DNA]</scope>
</reference>
<protein>
    <recommendedName>
        <fullName>Laccase-4</fullName>
        <ecNumber evidence="2">1.10.3.2</ecNumber>
    </recommendedName>
    <alternativeName>
        <fullName>Benzenediol:oxygen oxidoreductase 4</fullName>
    </alternativeName>
    <alternativeName>
        <fullName>Diphenol oxidase 4</fullName>
    </alternativeName>
    <alternativeName>
        <fullName>Urishiol oxidase 4</fullName>
    </alternativeName>
</protein>
<evidence type="ECO:0000250" key="1">
    <source>
        <dbReference type="UniProtKB" id="D0VWU3"/>
    </source>
</evidence>
<evidence type="ECO:0000250" key="2">
    <source>
        <dbReference type="UniProtKB" id="Q70KY3"/>
    </source>
</evidence>
<evidence type="ECO:0000250" key="3">
    <source>
        <dbReference type="UniProtKB" id="Q99044"/>
    </source>
</evidence>
<evidence type="ECO:0000255" key="4"/>
<evidence type="ECO:0000305" key="5"/>